<protein>
    <recommendedName>
        <fullName evidence="1">Leucyl/phenylalanyl-tRNA--protein transferase</fullName>
        <ecNumber evidence="1">2.3.2.6</ecNumber>
    </recommendedName>
    <alternativeName>
        <fullName evidence="1">L/F-transferase</fullName>
    </alternativeName>
    <alternativeName>
        <fullName evidence="1">Leucyltransferase</fullName>
    </alternativeName>
    <alternativeName>
        <fullName evidence="1">Phenyalanyltransferase</fullName>
    </alternativeName>
</protein>
<feature type="chain" id="PRO_0000258074" description="Leucyl/phenylalanyl-tRNA--protein transferase">
    <location>
        <begin position="1"/>
        <end position="194"/>
    </location>
</feature>
<name>LFTR_CHLL3</name>
<proteinExistence type="inferred from homology"/>
<accession>Q3B5N7</accession>
<evidence type="ECO:0000255" key="1">
    <source>
        <dbReference type="HAMAP-Rule" id="MF_00688"/>
    </source>
</evidence>
<reference key="1">
    <citation type="submission" date="2005-08" db="EMBL/GenBank/DDBJ databases">
        <title>Complete sequence of Pelodictyon luteolum DSM 273.</title>
        <authorList>
            <consortium name="US DOE Joint Genome Institute"/>
            <person name="Copeland A."/>
            <person name="Lucas S."/>
            <person name="Lapidus A."/>
            <person name="Barry K."/>
            <person name="Detter J.C."/>
            <person name="Glavina T."/>
            <person name="Hammon N."/>
            <person name="Israni S."/>
            <person name="Pitluck S."/>
            <person name="Bryant D."/>
            <person name="Schmutz J."/>
            <person name="Larimer F."/>
            <person name="Land M."/>
            <person name="Kyrpides N."/>
            <person name="Ivanova N."/>
            <person name="Richardson P."/>
        </authorList>
    </citation>
    <scope>NUCLEOTIDE SEQUENCE [LARGE SCALE GENOMIC DNA]</scope>
    <source>
        <strain>DSM 273 / BCRC 81028 / 2530</strain>
    </source>
</reference>
<sequence>MIPVDALLKAYREGFFPMADASDGQLYWCRPEMRALFPLESYRPSRDVLRLQRRGEYSVFFDSDFEAVIRACAAPRKDDPETWISGEIVETYIRIHELGLAHSVECRYRGELAGGLYGIAIGGAFFGESMFYRRSYASQVALWHLVCHLRLKGYLMLDAQIMNPHLRRLGAVEVPHDEYMRLLEAALRKKTAFL</sequence>
<organism>
    <name type="scientific">Chlorobium luteolum (strain DSM 273 / BCRC 81028 / 2530)</name>
    <name type="common">Pelodictyon luteolum</name>
    <dbReference type="NCBI Taxonomy" id="319225"/>
    <lineage>
        <taxon>Bacteria</taxon>
        <taxon>Pseudomonadati</taxon>
        <taxon>Chlorobiota</taxon>
        <taxon>Chlorobiia</taxon>
        <taxon>Chlorobiales</taxon>
        <taxon>Chlorobiaceae</taxon>
        <taxon>Chlorobium/Pelodictyon group</taxon>
        <taxon>Pelodictyon</taxon>
    </lineage>
</organism>
<dbReference type="EC" id="2.3.2.6" evidence="1"/>
<dbReference type="EMBL" id="CP000096">
    <property type="protein sequence ID" value="ABB23344.1"/>
    <property type="molecule type" value="Genomic_DNA"/>
</dbReference>
<dbReference type="RefSeq" id="WP_011357219.1">
    <property type="nucleotide sequence ID" value="NC_007512.1"/>
</dbReference>
<dbReference type="SMR" id="Q3B5N7"/>
<dbReference type="STRING" id="319225.Plut_0456"/>
<dbReference type="KEGG" id="plt:Plut_0456"/>
<dbReference type="eggNOG" id="COG2360">
    <property type="taxonomic scope" value="Bacteria"/>
</dbReference>
<dbReference type="HOGENOM" id="CLU_075045_1_1_10"/>
<dbReference type="OrthoDB" id="9790282at2"/>
<dbReference type="Proteomes" id="UP000002709">
    <property type="component" value="Chromosome"/>
</dbReference>
<dbReference type="GO" id="GO:0005737">
    <property type="term" value="C:cytoplasm"/>
    <property type="evidence" value="ECO:0007669"/>
    <property type="project" value="UniProtKB-SubCell"/>
</dbReference>
<dbReference type="GO" id="GO:0008914">
    <property type="term" value="F:leucyl-tRNA--protein transferase activity"/>
    <property type="evidence" value="ECO:0007669"/>
    <property type="project" value="UniProtKB-UniRule"/>
</dbReference>
<dbReference type="GO" id="GO:0030163">
    <property type="term" value="P:protein catabolic process"/>
    <property type="evidence" value="ECO:0007669"/>
    <property type="project" value="UniProtKB-UniRule"/>
</dbReference>
<dbReference type="Gene3D" id="3.40.630.70">
    <property type="entry name" value="Leucyl/phenylalanyl-tRNA-protein transferase, C-terminal domain"/>
    <property type="match status" value="1"/>
</dbReference>
<dbReference type="HAMAP" id="MF_00688">
    <property type="entry name" value="Leu_Phe_trans"/>
    <property type="match status" value="1"/>
</dbReference>
<dbReference type="InterPro" id="IPR016181">
    <property type="entry name" value="Acyl_CoA_acyltransferase"/>
</dbReference>
<dbReference type="InterPro" id="IPR004616">
    <property type="entry name" value="Leu/Phe-tRNA_Trfase"/>
</dbReference>
<dbReference type="InterPro" id="IPR042203">
    <property type="entry name" value="Leu/Phe-tRNA_Trfase_C"/>
</dbReference>
<dbReference type="NCBIfam" id="TIGR00667">
    <property type="entry name" value="aat"/>
    <property type="match status" value="1"/>
</dbReference>
<dbReference type="PANTHER" id="PTHR30098">
    <property type="entry name" value="LEUCYL/PHENYLALANYL-TRNA--PROTEIN TRANSFERASE"/>
    <property type="match status" value="1"/>
</dbReference>
<dbReference type="PANTHER" id="PTHR30098:SF2">
    <property type="entry name" value="LEUCYL_PHENYLALANYL-TRNA--PROTEIN TRANSFERASE"/>
    <property type="match status" value="1"/>
</dbReference>
<dbReference type="Pfam" id="PF03588">
    <property type="entry name" value="Leu_Phe_trans"/>
    <property type="match status" value="1"/>
</dbReference>
<dbReference type="SUPFAM" id="SSF55729">
    <property type="entry name" value="Acyl-CoA N-acyltransferases (Nat)"/>
    <property type="match status" value="1"/>
</dbReference>
<comment type="function">
    <text evidence="1">Functions in the N-end rule pathway of protein degradation where it conjugates Leu, Phe and, less efficiently, Met from aminoacyl-tRNAs to the N-termini of proteins containing an N-terminal arginine or lysine.</text>
</comment>
<comment type="catalytic activity">
    <reaction evidence="1">
        <text>N-terminal L-lysyl-[protein] + L-leucyl-tRNA(Leu) = N-terminal L-leucyl-L-lysyl-[protein] + tRNA(Leu) + H(+)</text>
        <dbReference type="Rhea" id="RHEA:12340"/>
        <dbReference type="Rhea" id="RHEA-COMP:9613"/>
        <dbReference type="Rhea" id="RHEA-COMP:9622"/>
        <dbReference type="Rhea" id="RHEA-COMP:12670"/>
        <dbReference type="Rhea" id="RHEA-COMP:12671"/>
        <dbReference type="ChEBI" id="CHEBI:15378"/>
        <dbReference type="ChEBI" id="CHEBI:65249"/>
        <dbReference type="ChEBI" id="CHEBI:78442"/>
        <dbReference type="ChEBI" id="CHEBI:78494"/>
        <dbReference type="ChEBI" id="CHEBI:133043"/>
        <dbReference type="EC" id="2.3.2.6"/>
    </reaction>
</comment>
<comment type="catalytic activity">
    <reaction evidence="1">
        <text>N-terminal L-arginyl-[protein] + L-leucyl-tRNA(Leu) = N-terminal L-leucyl-L-arginyl-[protein] + tRNA(Leu) + H(+)</text>
        <dbReference type="Rhea" id="RHEA:50416"/>
        <dbReference type="Rhea" id="RHEA-COMP:9613"/>
        <dbReference type="Rhea" id="RHEA-COMP:9622"/>
        <dbReference type="Rhea" id="RHEA-COMP:12672"/>
        <dbReference type="Rhea" id="RHEA-COMP:12673"/>
        <dbReference type="ChEBI" id="CHEBI:15378"/>
        <dbReference type="ChEBI" id="CHEBI:64719"/>
        <dbReference type="ChEBI" id="CHEBI:78442"/>
        <dbReference type="ChEBI" id="CHEBI:78494"/>
        <dbReference type="ChEBI" id="CHEBI:133044"/>
        <dbReference type="EC" id="2.3.2.6"/>
    </reaction>
</comment>
<comment type="catalytic activity">
    <reaction evidence="1">
        <text>L-phenylalanyl-tRNA(Phe) + an N-terminal L-alpha-aminoacyl-[protein] = an N-terminal L-phenylalanyl-L-alpha-aminoacyl-[protein] + tRNA(Phe)</text>
        <dbReference type="Rhea" id="RHEA:43632"/>
        <dbReference type="Rhea" id="RHEA-COMP:9668"/>
        <dbReference type="Rhea" id="RHEA-COMP:9699"/>
        <dbReference type="Rhea" id="RHEA-COMP:10636"/>
        <dbReference type="Rhea" id="RHEA-COMP:10637"/>
        <dbReference type="ChEBI" id="CHEBI:78442"/>
        <dbReference type="ChEBI" id="CHEBI:78531"/>
        <dbReference type="ChEBI" id="CHEBI:78597"/>
        <dbReference type="ChEBI" id="CHEBI:83561"/>
        <dbReference type="EC" id="2.3.2.6"/>
    </reaction>
</comment>
<comment type="subcellular location">
    <subcellularLocation>
        <location evidence="1">Cytoplasm</location>
    </subcellularLocation>
</comment>
<comment type="similarity">
    <text evidence="1">Belongs to the L/F-transferase family.</text>
</comment>
<keyword id="KW-0012">Acyltransferase</keyword>
<keyword id="KW-0963">Cytoplasm</keyword>
<keyword id="KW-1185">Reference proteome</keyword>
<keyword id="KW-0808">Transferase</keyword>
<gene>
    <name evidence="1" type="primary">aat</name>
    <name type="ordered locus">Plut_0456</name>
</gene>